<protein>
    <recommendedName>
        <fullName evidence="1">Probable DNA-directed RNA polymerase subunit delta</fullName>
    </recommendedName>
    <alternativeName>
        <fullName evidence="1">RNAP delta factor</fullName>
    </alternativeName>
</protein>
<feature type="chain" id="PRO_0000303129" description="Probable DNA-directed RNA polymerase subunit delta">
    <location>
        <begin position="1"/>
        <end position="196"/>
    </location>
</feature>
<feature type="domain" description="HTH HARE-type" evidence="2">
    <location>
        <begin position="14"/>
        <end position="81"/>
    </location>
</feature>
<feature type="region of interest" description="Disordered" evidence="3">
    <location>
        <begin position="119"/>
        <end position="196"/>
    </location>
</feature>
<feature type="compositionally biased region" description="Acidic residues" evidence="3">
    <location>
        <begin position="119"/>
        <end position="150"/>
    </location>
</feature>
<feature type="compositionally biased region" description="Basic and acidic residues" evidence="3">
    <location>
        <begin position="151"/>
        <end position="161"/>
    </location>
</feature>
<feature type="compositionally biased region" description="Acidic residues" evidence="3">
    <location>
        <begin position="162"/>
        <end position="176"/>
    </location>
</feature>
<feature type="compositionally biased region" description="Acidic residues" evidence="3">
    <location>
        <begin position="186"/>
        <end position="196"/>
    </location>
</feature>
<proteinExistence type="inferred from homology"/>
<evidence type="ECO:0000255" key="1">
    <source>
        <dbReference type="HAMAP-Rule" id="MF_00357"/>
    </source>
</evidence>
<evidence type="ECO:0000255" key="2">
    <source>
        <dbReference type="PROSITE-ProRule" id="PRU01261"/>
    </source>
</evidence>
<evidence type="ECO:0000256" key="3">
    <source>
        <dbReference type="SAM" id="MobiDB-lite"/>
    </source>
</evidence>
<organism>
    <name type="scientific">Ligilactobacillus salivarius (strain UCC118)</name>
    <name type="common">Lactobacillus salivarius</name>
    <dbReference type="NCBI Taxonomy" id="362948"/>
    <lineage>
        <taxon>Bacteria</taxon>
        <taxon>Bacillati</taxon>
        <taxon>Bacillota</taxon>
        <taxon>Bacilli</taxon>
        <taxon>Lactobacillales</taxon>
        <taxon>Lactobacillaceae</taxon>
        <taxon>Ligilactobacillus</taxon>
    </lineage>
</organism>
<dbReference type="EMBL" id="CP000233">
    <property type="protein sequence ID" value="ABD99154.1"/>
    <property type="molecule type" value="Genomic_DNA"/>
</dbReference>
<dbReference type="RefSeq" id="WP_011475701.1">
    <property type="nucleotide sequence ID" value="NC_007929.1"/>
</dbReference>
<dbReference type="RefSeq" id="YP_535237.1">
    <property type="nucleotide sequence ID" value="NC_007929.1"/>
</dbReference>
<dbReference type="SMR" id="Q1WV31"/>
<dbReference type="STRING" id="362948.LSL_0341"/>
<dbReference type="KEGG" id="lsl:LSL_0341"/>
<dbReference type="PATRIC" id="fig|362948.14.peg.417"/>
<dbReference type="HOGENOM" id="CLU_116648_0_0_9"/>
<dbReference type="OrthoDB" id="401223at2"/>
<dbReference type="Proteomes" id="UP000006559">
    <property type="component" value="Chromosome"/>
</dbReference>
<dbReference type="GO" id="GO:0000428">
    <property type="term" value="C:DNA-directed RNA polymerase complex"/>
    <property type="evidence" value="ECO:0007669"/>
    <property type="project" value="UniProtKB-KW"/>
</dbReference>
<dbReference type="GO" id="GO:0003899">
    <property type="term" value="F:DNA-directed RNA polymerase activity"/>
    <property type="evidence" value="ECO:0007669"/>
    <property type="project" value="UniProtKB-UniRule"/>
</dbReference>
<dbReference type="GO" id="GO:0006351">
    <property type="term" value="P:DNA-templated transcription"/>
    <property type="evidence" value="ECO:0007669"/>
    <property type="project" value="InterPro"/>
</dbReference>
<dbReference type="GO" id="GO:0006355">
    <property type="term" value="P:regulation of DNA-templated transcription"/>
    <property type="evidence" value="ECO:0007669"/>
    <property type="project" value="UniProtKB-UniRule"/>
</dbReference>
<dbReference type="Gene3D" id="1.10.10.1250">
    <property type="entry name" value="RNA polymerase, subunit delta, N-terminal domain"/>
    <property type="match status" value="1"/>
</dbReference>
<dbReference type="HAMAP" id="MF_00357">
    <property type="entry name" value="RNApol_bact_RpoE"/>
    <property type="match status" value="1"/>
</dbReference>
<dbReference type="InterPro" id="IPR007759">
    <property type="entry name" value="Asxl_HARE-HTH"/>
</dbReference>
<dbReference type="InterPro" id="IPR038087">
    <property type="entry name" value="RNAP_delta_N_dom_sf"/>
</dbReference>
<dbReference type="InterPro" id="IPR029757">
    <property type="entry name" value="RpoE"/>
</dbReference>
<dbReference type="NCBIfam" id="TIGR04567">
    <property type="entry name" value="RNAP_delt_lowGC"/>
    <property type="match status" value="1"/>
</dbReference>
<dbReference type="Pfam" id="PF05066">
    <property type="entry name" value="HARE-HTH"/>
    <property type="match status" value="1"/>
</dbReference>
<dbReference type="PROSITE" id="PS51913">
    <property type="entry name" value="HTH_HARE"/>
    <property type="match status" value="1"/>
</dbReference>
<reference key="1">
    <citation type="journal article" date="2006" name="Proc. Natl. Acad. Sci. U.S.A.">
        <title>Multireplicon genome architecture of Lactobacillus salivarius.</title>
        <authorList>
            <person name="Claesson M.J."/>
            <person name="Li Y."/>
            <person name="Leahy S."/>
            <person name="Canchaya C."/>
            <person name="van Pijkeren J.P."/>
            <person name="Cerdeno-Tarraga A.M."/>
            <person name="Parkhill J."/>
            <person name="Flynn S."/>
            <person name="O'Sullivan G.C."/>
            <person name="Collins J.K."/>
            <person name="Higgins D."/>
            <person name="Shanahan F."/>
            <person name="Fitzgerald G.F."/>
            <person name="van Sinderen D."/>
            <person name="O'Toole P.W."/>
        </authorList>
    </citation>
    <scope>NUCLEOTIDE SEQUENCE [LARGE SCALE GENOMIC DNA]</scope>
    <source>
        <strain>UCC118</strain>
    </source>
</reference>
<keyword id="KW-0240">DNA-directed RNA polymerase</keyword>
<keyword id="KW-0548">Nucleotidyltransferase</keyword>
<keyword id="KW-1185">Reference proteome</keyword>
<keyword id="KW-0804">Transcription</keyword>
<keyword id="KW-0808">Transferase</keyword>
<comment type="function">
    <text evidence="1">Participates in both the initiation and recycling phases of transcription. In the presence of the delta subunit, RNAP displays an increased specificity of transcription, a decreased affinity for nucleic acids, and an increased efficiency of RNA synthesis because of enhanced recycling.</text>
</comment>
<comment type="subunit">
    <text evidence="1">RNAP is composed of a core of 2 alpha, a beta and a beta' subunits. The core is associated with a delta subunit and one of several sigma factors.</text>
</comment>
<comment type="similarity">
    <text evidence="1">Belongs to the RpoE family.</text>
</comment>
<name>RPOE_LIGS1</name>
<accession>Q1WV31</accession>
<sequence>MELEKFKDANKDELSMIEVAHEILHQRGETMAFADLTNEIQVYLGKSDEEIRDRLAQFYTDLNIDGSFISLGDNVWGLRSWYPYDSIDEALVHGEDEEDEERPRKKRKKVNAFLADVSDDDDVIDYDDDDPEDEDLDNDYDDEDDDDDEGSHELKQYTKDLDDIDDGDDPEDELADGIEGQLTEFSDADLDEENQD</sequence>
<gene>
    <name evidence="1" type="primary">rpoE</name>
    <name type="ordered locus">LSL_0341</name>
</gene>